<comment type="function">
    <text evidence="1">TFIIF is a general transcription initiation factor that binds to RNA polymerase II and helps to recruit it to the initiation complex in collaboration with TFIIB.</text>
</comment>
<comment type="subunit">
    <text>Heterodimer of an alpha and a beta subunit.</text>
</comment>
<comment type="subcellular location">
    <subcellularLocation>
        <location>Nucleus</location>
    </subcellularLocation>
</comment>
<comment type="similarity">
    <text evidence="2">Belongs to the TFIIF beta subunit family.</text>
</comment>
<feature type="chain" id="PRO_0000211238" description="General transcription factor IIF subunit 2">
    <location>
        <begin position="1"/>
        <end position="264"/>
    </location>
</feature>
<evidence type="ECO:0000250" key="1">
    <source>
        <dbReference type="UniProtKB" id="P13984"/>
    </source>
</evidence>
<evidence type="ECO:0000305" key="2"/>
<dbReference type="EMBL" id="Z15132">
    <property type="protein sequence ID" value="CAA78835.1"/>
    <property type="molecule type" value="mRNA"/>
</dbReference>
<dbReference type="EMBL" id="BC073677">
    <property type="protein sequence ID" value="AAH73677.1"/>
    <property type="molecule type" value="mRNA"/>
</dbReference>
<dbReference type="PIR" id="S30220">
    <property type="entry name" value="S30220"/>
</dbReference>
<dbReference type="RefSeq" id="NP_001082266.1">
    <property type="nucleotide sequence ID" value="NM_001088797.1"/>
</dbReference>
<dbReference type="SMR" id="Q03123"/>
<dbReference type="DNASU" id="398333"/>
<dbReference type="GeneID" id="398333"/>
<dbReference type="KEGG" id="xla:398333"/>
<dbReference type="AGR" id="Xenbase:XB-GENE-866607"/>
<dbReference type="CTD" id="398333"/>
<dbReference type="Xenbase" id="XB-GENE-866607">
    <property type="gene designation" value="gtf2f2.S"/>
</dbReference>
<dbReference type="OMA" id="PIADNCY"/>
<dbReference type="OrthoDB" id="26094at2759"/>
<dbReference type="Proteomes" id="UP000186698">
    <property type="component" value="Chromosome 2S"/>
</dbReference>
<dbReference type="Bgee" id="398333">
    <property type="expression patterns" value="Expressed in gastrula and 19 other cell types or tissues"/>
</dbReference>
<dbReference type="GO" id="GO:0005674">
    <property type="term" value="C:transcription factor TFIIF complex"/>
    <property type="evidence" value="ECO:0000318"/>
    <property type="project" value="GO_Central"/>
</dbReference>
<dbReference type="GO" id="GO:0003677">
    <property type="term" value="F:DNA binding"/>
    <property type="evidence" value="ECO:0007669"/>
    <property type="project" value="UniProtKB-KW"/>
</dbReference>
<dbReference type="GO" id="GO:0006366">
    <property type="term" value="P:transcription by RNA polymerase II"/>
    <property type="evidence" value="ECO:0000250"/>
    <property type="project" value="UniProtKB"/>
</dbReference>
<dbReference type="GO" id="GO:0006367">
    <property type="term" value="P:transcription initiation at RNA polymerase II promoter"/>
    <property type="evidence" value="ECO:0000318"/>
    <property type="project" value="GO_Central"/>
</dbReference>
<dbReference type="CDD" id="cd07980">
    <property type="entry name" value="TFIIF_beta"/>
    <property type="match status" value="1"/>
</dbReference>
<dbReference type="FunFam" id="1.10.10.10:FF:000035">
    <property type="entry name" value="General transcription factor IIF subunit 2"/>
    <property type="match status" value="1"/>
</dbReference>
<dbReference type="Gene3D" id="1.10.10.10">
    <property type="entry name" value="Winged helix-like DNA-binding domain superfamily/Winged helix DNA-binding domain"/>
    <property type="match status" value="1"/>
</dbReference>
<dbReference type="InterPro" id="IPR003196">
    <property type="entry name" value="TFIIF_beta"/>
</dbReference>
<dbReference type="InterPro" id="IPR040450">
    <property type="entry name" value="TFIIF_beta_HTH"/>
</dbReference>
<dbReference type="InterPro" id="IPR040504">
    <property type="entry name" value="TFIIF_beta_N"/>
</dbReference>
<dbReference type="InterPro" id="IPR011039">
    <property type="entry name" value="TFIIF_interaction"/>
</dbReference>
<dbReference type="InterPro" id="IPR036388">
    <property type="entry name" value="WH-like_DNA-bd_sf"/>
</dbReference>
<dbReference type="InterPro" id="IPR036390">
    <property type="entry name" value="WH_DNA-bd_sf"/>
</dbReference>
<dbReference type="PANTHER" id="PTHR10445">
    <property type="entry name" value="GENERAL TRANSCRIPTION FACTOR IIF SUBUNIT 2"/>
    <property type="match status" value="1"/>
</dbReference>
<dbReference type="PANTHER" id="PTHR10445:SF0">
    <property type="entry name" value="GENERAL TRANSCRIPTION FACTOR IIF SUBUNIT 2"/>
    <property type="match status" value="1"/>
</dbReference>
<dbReference type="Pfam" id="PF02270">
    <property type="entry name" value="TFIIF_beta"/>
    <property type="match status" value="1"/>
</dbReference>
<dbReference type="Pfam" id="PF17683">
    <property type="entry name" value="TFIIF_beta_N"/>
    <property type="match status" value="1"/>
</dbReference>
<dbReference type="PIRSF" id="PIRSF015849">
    <property type="entry name" value="TFIIF-beta"/>
    <property type="match status" value="1"/>
</dbReference>
<dbReference type="SUPFAM" id="SSF50916">
    <property type="entry name" value="Rap30/74 interaction domains"/>
    <property type="match status" value="1"/>
</dbReference>
<dbReference type="SUPFAM" id="SSF46785">
    <property type="entry name" value="Winged helix' DNA-binding domain"/>
    <property type="match status" value="1"/>
</dbReference>
<keyword id="KW-0238">DNA-binding</keyword>
<keyword id="KW-0539">Nucleus</keyword>
<keyword id="KW-1185">Reference proteome</keyword>
<keyword id="KW-0804">Transcription</keyword>
<keyword id="KW-0805">Transcription regulation</keyword>
<proteinExistence type="evidence at transcript level"/>
<protein>
    <recommendedName>
        <fullName>General transcription factor IIF subunit 2</fullName>
    </recommendedName>
    <alternativeName>
        <fullName>Transcription initiation factor IIF subunit beta</fullName>
        <shortName>TFIIF-beta</shortName>
    </alternativeName>
    <alternativeName>
        <fullName>Transcription initiation factor RAP30</fullName>
    </alternativeName>
</protein>
<accession>Q03123</accession>
<accession>Q6GN43</accession>
<name>T2FB_XENLA</name>
<reference key="1">
    <citation type="journal article" date="1992" name="Nucleic Acids Res.">
        <title>Imperfect conservation of a sigma factor-like subregion in Xenopus general transcription factor RAP30.</title>
        <authorList>
            <person name="Gong D.-W."/>
            <person name="Hashimoto S."/>
            <person name="Wada K."/>
            <person name="Roeder R.G."/>
            <person name="Nakatani Y."/>
            <person name="Horikoshi M."/>
        </authorList>
    </citation>
    <scope>NUCLEOTIDE SEQUENCE [MRNA]</scope>
    <source>
        <tissue>Oocyte</tissue>
    </source>
</reference>
<reference key="2">
    <citation type="submission" date="2004-06" db="EMBL/GenBank/DDBJ databases">
        <authorList>
            <consortium name="NIH - Xenopus Gene Collection (XGC) project"/>
        </authorList>
    </citation>
    <scope>NUCLEOTIDE SEQUENCE [LARGE SCALE MRNA]</scope>
    <source>
        <tissue>Embryo</tissue>
    </source>
</reference>
<sequence>MSAEKGELDLNGAKQNTGMWLVKLPKYLAQQWAKATGRGEVGKLRIVKNQGKTEVSFTLNEELASIQDIGGKPASSLVSTPREHPFLLQSVGGQTLTVLTESLSGQSEDKSENRVIDKLALEGIVVHRAECRPAASDNYMQMKRKQIEESSKPKRQSQQLEKAVTSNYKPVSNHQYNIEYEKKKKDDGKRARVDKHQVLDMLFSAFEKHQYYNIKDLVDITKQPVTYLKEILRDIGIYNMKGTHKNTWELKPEYRHYQGEDKSD</sequence>
<organism>
    <name type="scientific">Xenopus laevis</name>
    <name type="common">African clawed frog</name>
    <dbReference type="NCBI Taxonomy" id="8355"/>
    <lineage>
        <taxon>Eukaryota</taxon>
        <taxon>Metazoa</taxon>
        <taxon>Chordata</taxon>
        <taxon>Craniata</taxon>
        <taxon>Vertebrata</taxon>
        <taxon>Euteleostomi</taxon>
        <taxon>Amphibia</taxon>
        <taxon>Batrachia</taxon>
        <taxon>Anura</taxon>
        <taxon>Pipoidea</taxon>
        <taxon>Pipidae</taxon>
        <taxon>Xenopodinae</taxon>
        <taxon>Xenopus</taxon>
        <taxon>Xenopus</taxon>
    </lineage>
</organism>
<gene>
    <name type="primary">gtf2f2</name>
    <name type="synonym">rap30</name>
</gene>